<evidence type="ECO:0000255" key="1">
    <source>
        <dbReference type="HAMAP-Rule" id="MF_00758"/>
    </source>
</evidence>
<sequence>MSVLPTPLANQLLIALPALSDPTFSRSVALICQHDENGAMGVLVNRPSEYTLGEVLSQMGIDTDDEPLREQIVLSGGPVHPERGFVIHDDAREWDSSLEVGQGVFLTTSRDILEAMAAGNGPRNVLVALGCAGWGAGQLEFELGENSWLTAPSDANVLFATALEDRWQTAAGRIGVDLFRLTDYSGHA</sequence>
<reference key="1">
    <citation type="journal article" date="2005" name="Nucleic Acids Res.">
        <title>The genome sequence of Xanthomonas oryzae pathovar oryzae KACC10331, the bacterial blight pathogen of rice.</title>
        <authorList>
            <person name="Lee B.-M."/>
            <person name="Park Y.-J."/>
            <person name="Park D.-S."/>
            <person name="Kang H.-W."/>
            <person name="Kim J.-G."/>
            <person name="Song E.-S."/>
            <person name="Park I.-C."/>
            <person name="Yoon U.-H."/>
            <person name="Hahn J.-H."/>
            <person name="Koo B.-S."/>
            <person name="Lee G.-B."/>
            <person name="Kim H."/>
            <person name="Park H.-S."/>
            <person name="Yoon K.-O."/>
            <person name="Kim J.-H."/>
            <person name="Jung C.-H."/>
            <person name="Koh N.-H."/>
            <person name="Seo J.-S."/>
            <person name="Go S.-J."/>
        </authorList>
    </citation>
    <scope>NUCLEOTIDE SEQUENCE [LARGE SCALE GENOMIC DNA]</scope>
    <source>
        <strain>KACC10331 / KXO85</strain>
    </source>
</reference>
<dbReference type="EMBL" id="AE013598">
    <property type="protein sequence ID" value="AAW74679.1"/>
    <property type="molecule type" value="Genomic_DNA"/>
</dbReference>
<dbReference type="SMR" id="Q5H2Z2"/>
<dbReference type="STRING" id="291331.XOO1425"/>
<dbReference type="KEGG" id="xoo:XOO1425"/>
<dbReference type="HOGENOM" id="CLU_057596_1_0_6"/>
<dbReference type="Proteomes" id="UP000006735">
    <property type="component" value="Chromosome"/>
</dbReference>
<dbReference type="GO" id="GO:0005829">
    <property type="term" value="C:cytosol"/>
    <property type="evidence" value="ECO:0007669"/>
    <property type="project" value="TreeGrafter"/>
</dbReference>
<dbReference type="Gene3D" id="3.40.1740.10">
    <property type="entry name" value="VC0467-like"/>
    <property type="match status" value="1"/>
</dbReference>
<dbReference type="HAMAP" id="MF_00758">
    <property type="entry name" value="UPF0301"/>
    <property type="match status" value="1"/>
</dbReference>
<dbReference type="InterPro" id="IPR003774">
    <property type="entry name" value="AlgH-like"/>
</dbReference>
<dbReference type="NCBIfam" id="NF001266">
    <property type="entry name" value="PRK00228.1-1"/>
    <property type="match status" value="1"/>
</dbReference>
<dbReference type="PANTHER" id="PTHR30327">
    <property type="entry name" value="UNCHARACTERIZED PROTEIN YQGE"/>
    <property type="match status" value="1"/>
</dbReference>
<dbReference type="PANTHER" id="PTHR30327:SF1">
    <property type="entry name" value="UPF0301 PROTEIN YQGE"/>
    <property type="match status" value="1"/>
</dbReference>
<dbReference type="Pfam" id="PF02622">
    <property type="entry name" value="DUF179"/>
    <property type="match status" value="1"/>
</dbReference>
<dbReference type="SUPFAM" id="SSF143456">
    <property type="entry name" value="VC0467-like"/>
    <property type="match status" value="1"/>
</dbReference>
<keyword id="KW-1185">Reference proteome</keyword>
<gene>
    <name type="ordered locus">XOO1425</name>
</gene>
<feature type="chain" id="PRO_0000258893" description="UPF0301 protein XOO1425">
    <location>
        <begin position="1"/>
        <end position="188"/>
    </location>
</feature>
<protein>
    <recommendedName>
        <fullName evidence="1">UPF0301 protein XOO1425</fullName>
    </recommendedName>
</protein>
<comment type="similarity">
    <text evidence="1">Belongs to the UPF0301 (AlgH) family.</text>
</comment>
<accession>Q5H2Z2</accession>
<proteinExistence type="inferred from homology"/>
<organism>
    <name type="scientific">Xanthomonas oryzae pv. oryzae (strain KACC10331 / KXO85)</name>
    <dbReference type="NCBI Taxonomy" id="291331"/>
    <lineage>
        <taxon>Bacteria</taxon>
        <taxon>Pseudomonadati</taxon>
        <taxon>Pseudomonadota</taxon>
        <taxon>Gammaproteobacteria</taxon>
        <taxon>Lysobacterales</taxon>
        <taxon>Lysobacteraceae</taxon>
        <taxon>Xanthomonas</taxon>
    </lineage>
</organism>
<name>Y1425_XANOR</name>